<organism>
    <name type="scientific">Cricetulus griseus</name>
    <name type="common">Chinese hamster</name>
    <name type="synonym">Cricetulus barabensis griseus</name>
    <dbReference type="NCBI Taxonomy" id="10029"/>
    <lineage>
        <taxon>Eukaryota</taxon>
        <taxon>Metazoa</taxon>
        <taxon>Chordata</taxon>
        <taxon>Craniata</taxon>
        <taxon>Vertebrata</taxon>
        <taxon>Euteleostomi</taxon>
        <taxon>Mammalia</taxon>
        <taxon>Eutheria</taxon>
        <taxon>Euarchontoglires</taxon>
        <taxon>Glires</taxon>
        <taxon>Rodentia</taxon>
        <taxon>Myomorpha</taxon>
        <taxon>Muroidea</taxon>
        <taxon>Cricetidae</taxon>
        <taxon>Cricetinae</taxon>
        <taxon>Cricetulus</taxon>
    </lineage>
</organism>
<sequence>MQPGPALQAVLLAVLLSEPRSSKGRLLSGQLVCRGGTRRPCYKVIYFHDAFQRLNFEEAKEACRRDGGQLVSIETEDEQRLIEKFIENLLASDGDFWIGLRRLEVKQVNNTACQDLYAWTDGSTSQFRNWYVDEPSCGSEVCVVMYHQPSAPPGIGGSYMFQWNDDRCNMKNNFICKYADEKPSTTPSIRPGGEATEPPTPVLPEETQKEDTKETFKESREAALNLAYILIPSIPLFLLLVVTSAACWVWICRRRKQEQPDPTTKEQHTIWPTPHQENSPNLDVYNVIRKQSEADLTEPRPDLKNISFRVCSSEAPPDDISCDYDNMAVNPSESGFVTLASMESGFVTNDIYEFSPDRMGRSKESGWVENEIYY</sequence>
<keyword id="KW-1015">Disulfide bond</keyword>
<keyword id="KW-0325">Glycoprotein</keyword>
<keyword id="KW-0430">Lectin</keyword>
<keyword id="KW-0472">Membrane</keyword>
<keyword id="KW-0597">Phosphoprotein</keyword>
<keyword id="KW-0677">Repeat</keyword>
<keyword id="KW-0732">Signal</keyword>
<keyword id="KW-0812">Transmembrane</keyword>
<keyword id="KW-1133">Transmembrane helix</keyword>
<dbReference type="EMBL" id="AF093673">
    <property type="protein sequence ID" value="AAC68695.1"/>
    <property type="molecule type" value="mRNA"/>
</dbReference>
<dbReference type="RefSeq" id="NP_001233610.1">
    <property type="nucleotide sequence ID" value="NM_001246681.1"/>
</dbReference>
<dbReference type="SMR" id="Q9Z209"/>
<dbReference type="GlyCosmos" id="Q9Z209">
    <property type="glycosylation" value="1 site, No reported glycans"/>
</dbReference>
<dbReference type="PaxDb" id="10029-NP_001233610.1"/>
<dbReference type="GeneID" id="100689416"/>
<dbReference type="KEGG" id="cge:100689416"/>
<dbReference type="CTD" id="143903"/>
<dbReference type="eggNOG" id="KOG4297">
    <property type="taxonomic scope" value="Eukaryota"/>
</dbReference>
<dbReference type="OMA" id="WVWIYRK"/>
<dbReference type="OrthoDB" id="5797898at2759"/>
<dbReference type="Proteomes" id="UP000694386">
    <property type="component" value="Unplaced"/>
</dbReference>
<dbReference type="Proteomes" id="UP001108280">
    <property type="component" value="Chromosome 4"/>
</dbReference>
<dbReference type="GO" id="GO:0009986">
    <property type="term" value="C:cell surface"/>
    <property type="evidence" value="ECO:0000314"/>
    <property type="project" value="HGNC-UCL"/>
</dbReference>
<dbReference type="GO" id="GO:0005737">
    <property type="term" value="C:cytoplasm"/>
    <property type="evidence" value="ECO:0007669"/>
    <property type="project" value="TreeGrafter"/>
</dbReference>
<dbReference type="GO" id="GO:0016020">
    <property type="term" value="C:membrane"/>
    <property type="evidence" value="ECO:0007669"/>
    <property type="project" value="UniProtKB-SubCell"/>
</dbReference>
<dbReference type="GO" id="GO:0001726">
    <property type="term" value="C:ruffle"/>
    <property type="evidence" value="ECO:0000314"/>
    <property type="project" value="HGNC-UCL"/>
</dbReference>
<dbReference type="GO" id="GO:0030246">
    <property type="term" value="F:carbohydrate binding"/>
    <property type="evidence" value="ECO:0007669"/>
    <property type="project" value="UniProtKB-KW"/>
</dbReference>
<dbReference type="GO" id="GO:0050772">
    <property type="term" value="P:positive regulation of axonogenesis"/>
    <property type="evidence" value="ECO:0007669"/>
    <property type="project" value="TreeGrafter"/>
</dbReference>
<dbReference type="CDD" id="cd03595">
    <property type="entry name" value="CLECT_chondrolectin_like"/>
    <property type="match status" value="1"/>
</dbReference>
<dbReference type="FunFam" id="3.10.100.10:FF:000006">
    <property type="entry name" value="Layilin b"/>
    <property type="match status" value="1"/>
</dbReference>
<dbReference type="Gene3D" id="3.10.100.10">
    <property type="entry name" value="Mannose-Binding Protein A, subunit A"/>
    <property type="match status" value="1"/>
</dbReference>
<dbReference type="InterPro" id="IPR001304">
    <property type="entry name" value="C-type_lectin-like"/>
</dbReference>
<dbReference type="InterPro" id="IPR016186">
    <property type="entry name" value="C-type_lectin-like/link_sf"/>
</dbReference>
<dbReference type="InterPro" id="IPR051505">
    <property type="entry name" value="C-type_lectin_domain"/>
</dbReference>
<dbReference type="InterPro" id="IPR016187">
    <property type="entry name" value="CTDL_fold"/>
</dbReference>
<dbReference type="PANTHER" id="PTHR14789:SF1">
    <property type="entry name" value="CHONDROLECTIN"/>
    <property type="match status" value="1"/>
</dbReference>
<dbReference type="PANTHER" id="PTHR14789">
    <property type="entry name" value="CHONDROLECTIN VARIANT CHODLFDELTAE"/>
    <property type="match status" value="1"/>
</dbReference>
<dbReference type="Pfam" id="PF00059">
    <property type="entry name" value="Lectin_C"/>
    <property type="match status" value="1"/>
</dbReference>
<dbReference type="SMART" id="SM00034">
    <property type="entry name" value="CLECT"/>
    <property type="match status" value="1"/>
</dbReference>
<dbReference type="SUPFAM" id="SSF56436">
    <property type="entry name" value="C-type lectin-like"/>
    <property type="match status" value="1"/>
</dbReference>
<dbReference type="PROSITE" id="PS50041">
    <property type="entry name" value="C_TYPE_LECTIN_2"/>
    <property type="match status" value="1"/>
</dbReference>
<comment type="function">
    <text evidence="1">Receptor for hyaluronate.</text>
</comment>
<comment type="subunit">
    <text evidence="1 6">Interacts with NF2 and RDX (By similarity). Interacts with TLN1.</text>
</comment>
<comment type="subcellular location">
    <subcellularLocation>
        <location evidence="7">Membrane</location>
        <topology evidence="7">Single-pass type I membrane protein</topology>
    </subcellularLocation>
    <text evidence="6">Colocalizes with TLN1 at the membrane ruffles.</text>
</comment>
<comment type="tissue specificity">
    <text evidence="6">Widely expressed. Abundant in the ovary.</text>
</comment>
<comment type="domain">
    <text evidence="1">The C-terminal domain interacts with the N-terminal domain of RDX.</text>
</comment>
<evidence type="ECO:0000250" key="1"/>
<evidence type="ECO:0000250" key="2">
    <source>
        <dbReference type="UniProtKB" id="Q8C351"/>
    </source>
</evidence>
<evidence type="ECO:0000255" key="3"/>
<evidence type="ECO:0000255" key="4">
    <source>
        <dbReference type="PROSITE-ProRule" id="PRU00040"/>
    </source>
</evidence>
<evidence type="ECO:0000256" key="5">
    <source>
        <dbReference type="SAM" id="MobiDB-lite"/>
    </source>
</evidence>
<evidence type="ECO:0000269" key="6">
    <source>
    </source>
</evidence>
<evidence type="ECO:0000305" key="7"/>
<protein>
    <recommendedName>
        <fullName>Layilin</fullName>
    </recommendedName>
</protein>
<proteinExistence type="evidence at protein level"/>
<gene>
    <name type="primary">LAYN</name>
</gene>
<reference key="1">
    <citation type="journal article" date="1998" name="J. Cell Biol.">
        <title>Layilin, a novel talin-binding transmembrane protein homologous with C-type lectins, is localized in membrane ruffles.</title>
        <authorList>
            <person name="Borowsky M.L."/>
            <person name="Hynes R.O."/>
        </authorList>
    </citation>
    <scope>NUCLEOTIDE SEQUENCE [MRNA]</scope>
    <scope>SUBCELLULAR LOCATION</scope>
    <scope>TISSUE SPECIFICITY</scope>
    <scope>INTERACTION WITH TLN1</scope>
</reference>
<accession>Q9Z209</accession>
<name>LAYN_CRIGR</name>
<feature type="signal peptide" evidence="3">
    <location>
        <begin position="1"/>
        <end position="24"/>
    </location>
</feature>
<feature type="chain" id="PRO_0000262507" description="Layilin">
    <location>
        <begin position="25"/>
        <end position="374"/>
    </location>
</feature>
<feature type="topological domain" description="Extracellular" evidence="3">
    <location>
        <begin position="25"/>
        <end position="221"/>
    </location>
</feature>
<feature type="transmembrane region" description="Helical" evidence="3">
    <location>
        <begin position="222"/>
        <end position="242"/>
    </location>
</feature>
<feature type="topological domain" description="Cytoplasmic" evidence="3">
    <location>
        <begin position="243"/>
        <end position="374"/>
    </location>
</feature>
<feature type="domain" description="C-type lectin" evidence="4">
    <location>
        <begin position="37"/>
        <end position="177"/>
    </location>
</feature>
<feature type="repeat" description="1-1">
    <location>
        <begin position="333"/>
        <end position="337"/>
    </location>
</feature>
<feature type="repeat" description="1-2">
    <location>
        <begin position="343"/>
        <end position="347"/>
    </location>
</feature>
<feature type="repeat" description="2-1">
    <location>
        <begin position="349"/>
        <end position="352"/>
    </location>
</feature>
<feature type="repeat" description="1-3">
    <location>
        <begin position="364"/>
        <end position="368"/>
    </location>
</feature>
<feature type="repeat" description="2-2">
    <location>
        <begin position="370"/>
        <end position="373"/>
    </location>
</feature>
<feature type="region of interest" description="Disordered" evidence="5">
    <location>
        <begin position="184"/>
        <end position="212"/>
    </location>
</feature>
<feature type="region of interest" description="Interaction with NF2" evidence="1">
    <location>
        <begin position="323"/>
        <end position="367"/>
    </location>
</feature>
<feature type="region of interest" description="Interaction with TLN1" evidence="6">
    <location>
        <begin position="330"/>
        <end position="374"/>
    </location>
</feature>
<feature type="region of interest" description="3 X 5 AA repeats of E-S-G-X-V">
    <location>
        <begin position="333"/>
        <end position="368"/>
    </location>
</feature>
<feature type="region of interest" description="2 X 4 AA repeats of N-X-I-Y">
    <location>
        <begin position="349"/>
        <end position="373"/>
    </location>
</feature>
<feature type="modified residue" description="Phosphoserine" evidence="2">
    <location>
        <position position="279"/>
    </location>
</feature>
<feature type="modified residue" description="Phosphoserine" evidence="2">
    <location>
        <position position="292"/>
    </location>
</feature>
<feature type="glycosylation site" description="N-linked (GlcNAc...) asparagine" evidence="3">
    <location>
        <position position="109"/>
    </location>
</feature>
<feature type="disulfide bond" evidence="4">
    <location>
        <begin position="63"/>
        <end position="176"/>
    </location>
</feature>
<feature type="disulfide bond" evidence="4">
    <location>
        <begin position="142"/>
        <end position="168"/>
    </location>
</feature>